<comment type="function">
    <text evidence="1">Catalyzes the methylthiolation of N6-(dimethylallyl)adenosine (i(6)A), leading to the formation of 2-methylthio-N6-(dimethylallyl)adenosine (ms(2)i(6)A) at position 37 in tRNAs that read codons beginning with uridine.</text>
</comment>
<comment type="catalytic activity">
    <reaction evidence="1">
        <text>N(6)-dimethylallyladenosine(37) in tRNA + (sulfur carrier)-SH + AH2 + 2 S-adenosyl-L-methionine = 2-methylsulfanyl-N(6)-dimethylallyladenosine(37) in tRNA + (sulfur carrier)-H + 5'-deoxyadenosine + L-methionine + A + S-adenosyl-L-homocysteine + 2 H(+)</text>
        <dbReference type="Rhea" id="RHEA:37067"/>
        <dbReference type="Rhea" id="RHEA-COMP:10375"/>
        <dbReference type="Rhea" id="RHEA-COMP:10376"/>
        <dbReference type="Rhea" id="RHEA-COMP:14737"/>
        <dbReference type="Rhea" id="RHEA-COMP:14739"/>
        <dbReference type="ChEBI" id="CHEBI:13193"/>
        <dbReference type="ChEBI" id="CHEBI:15378"/>
        <dbReference type="ChEBI" id="CHEBI:17319"/>
        <dbReference type="ChEBI" id="CHEBI:17499"/>
        <dbReference type="ChEBI" id="CHEBI:29917"/>
        <dbReference type="ChEBI" id="CHEBI:57844"/>
        <dbReference type="ChEBI" id="CHEBI:57856"/>
        <dbReference type="ChEBI" id="CHEBI:59789"/>
        <dbReference type="ChEBI" id="CHEBI:64428"/>
        <dbReference type="ChEBI" id="CHEBI:74415"/>
        <dbReference type="ChEBI" id="CHEBI:74417"/>
        <dbReference type="EC" id="2.8.4.3"/>
    </reaction>
</comment>
<comment type="cofactor">
    <cofactor evidence="1">
        <name>[4Fe-4S] cluster</name>
        <dbReference type="ChEBI" id="CHEBI:49883"/>
    </cofactor>
    <text evidence="1">Binds 2 [4Fe-4S] clusters. One cluster is coordinated with 3 cysteines and an exchangeable S-adenosyl-L-methionine.</text>
</comment>
<comment type="subunit">
    <text evidence="1">Monomer.</text>
</comment>
<comment type="subcellular location">
    <subcellularLocation>
        <location evidence="1">Cytoplasm</location>
    </subcellularLocation>
</comment>
<comment type="similarity">
    <text evidence="1">Belongs to the methylthiotransferase family. MiaB subfamily.</text>
</comment>
<keyword id="KW-0004">4Fe-4S</keyword>
<keyword id="KW-0963">Cytoplasm</keyword>
<keyword id="KW-0408">Iron</keyword>
<keyword id="KW-0411">Iron-sulfur</keyword>
<keyword id="KW-0479">Metal-binding</keyword>
<keyword id="KW-0949">S-adenosyl-L-methionine</keyword>
<keyword id="KW-0808">Transferase</keyword>
<keyword id="KW-0819">tRNA processing</keyword>
<gene>
    <name evidence="1" type="primary">miaB</name>
    <name type="ordered locus">Dgeo_1369</name>
</gene>
<protein>
    <recommendedName>
        <fullName evidence="1">tRNA-2-methylthio-N(6)-dimethylallyladenosine synthase</fullName>
        <ecNumber evidence="1">2.8.4.3</ecNumber>
    </recommendedName>
    <alternativeName>
        <fullName evidence="1">(Dimethylallyl)adenosine tRNA methylthiotransferase MiaB</fullName>
    </alternativeName>
    <alternativeName>
        <fullName evidence="1">tRNA-i(6)A37 methylthiotransferase</fullName>
    </alternativeName>
</protein>
<proteinExistence type="inferred from homology"/>
<name>MIAB_DEIGD</name>
<accession>Q1IYM0</accession>
<sequence length="459" mass="51012">MRAHLITYGCQMNEYDTHLVESQLVSFGADIVSSVDEADFVLINTCAVRGKPVDKVRSLLGDLRKQKAQRPLVVGMMGCLAQLEEGQQIARKFEVDVLLGPGSLLDIGKALETNERFWGLQFKDELHGHIPPPPQGKLQAHLTIMRGCDHHCTYCIVPTTRGPQVSRHPDDILRELDLLLAAGVQEVTLLGQNVNAYGVDQGARLAGYPSFANLLRLVGRSGIRRVKFTTSHPMNFTEDVAAAMAETPAVCEYVHLPVQSGSNRVLRRMAREYTREKYLSHIAEIRRHLPDVVLATDIIVGFPGETEEDFQETLSLYDEVGYDAAYMFIYSARPGTPSYKHFADLPREVKTERLQRLIAKQKEWSARKNAAKVGTIQEVLLRGDAHDAHFLEGHTRGNHPTVVPKAAGASGPGIYRARIEHATPHMLYGRLIGEDGQDLPELPRFNPEAAGLSHPLQMV</sequence>
<reference key="1">
    <citation type="submission" date="2006-04" db="EMBL/GenBank/DDBJ databases">
        <title>Complete sequence of chromosome of Deinococcus geothermalis DSM 11300.</title>
        <authorList>
            <person name="Copeland A."/>
            <person name="Lucas S."/>
            <person name="Lapidus A."/>
            <person name="Barry K."/>
            <person name="Detter J.C."/>
            <person name="Glavina del Rio T."/>
            <person name="Hammon N."/>
            <person name="Israni S."/>
            <person name="Dalin E."/>
            <person name="Tice H."/>
            <person name="Pitluck S."/>
            <person name="Brettin T."/>
            <person name="Bruce D."/>
            <person name="Han C."/>
            <person name="Tapia R."/>
            <person name="Saunders E."/>
            <person name="Gilna P."/>
            <person name="Schmutz J."/>
            <person name="Larimer F."/>
            <person name="Land M."/>
            <person name="Hauser L."/>
            <person name="Kyrpides N."/>
            <person name="Kim E."/>
            <person name="Daly M.J."/>
            <person name="Fredrickson J.K."/>
            <person name="Makarova K.S."/>
            <person name="Gaidamakova E.K."/>
            <person name="Zhai M."/>
            <person name="Richardson P."/>
        </authorList>
    </citation>
    <scope>NUCLEOTIDE SEQUENCE [LARGE SCALE GENOMIC DNA]</scope>
    <source>
        <strain>DSM 11300 / CIP 105573 / AG-3a</strain>
    </source>
</reference>
<organism>
    <name type="scientific">Deinococcus geothermalis (strain DSM 11300 / CIP 105573 / AG-3a)</name>
    <dbReference type="NCBI Taxonomy" id="319795"/>
    <lineage>
        <taxon>Bacteria</taxon>
        <taxon>Thermotogati</taxon>
        <taxon>Deinococcota</taxon>
        <taxon>Deinococci</taxon>
        <taxon>Deinococcales</taxon>
        <taxon>Deinococcaceae</taxon>
        <taxon>Deinococcus</taxon>
    </lineage>
</organism>
<feature type="chain" id="PRO_0000374258" description="tRNA-2-methylthio-N(6)-dimethylallyladenosine synthase">
    <location>
        <begin position="1"/>
        <end position="459"/>
    </location>
</feature>
<feature type="domain" description="MTTase N-terminal" evidence="1">
    <location>
        <begin position="1"/>
        <end position="116"/>
    </location>
</feature>
<feature type="domain" description="Radical SAM core" evidence="2">
    <location>
        <begin position="134"/>
        <end position="367"/>
    </location>
</feature>
<feature type="domain" description="TRAM" evidence="1">
    <location>
        <begin position="370"/>
        <end position="433"/>
    </location>
</feature>
<feature type="binding site" evidence="1">
    <location>
        <position position="10"/>
    </location>
    <ligand>
        <name>[4Fe-4S] cluster</name>
        <dbReference type="ChEBI" id="CHEBI:49883"/>
        <label>1</label>
    </ligand>
</feature>
<feature type="binding site" evidence="1">
    <location>
        <position position="46"/>
    </location>
    <ligand>
        <name>[4Fe-4S] cluster</name>
        <dbReference type="ChEBI" id="CHEBI:49883"/>
        <label>1</label>
    </ligand>
</feature>
<feature type="binding site" evidence="1">
    <location>
        <position position="79"/>
    </location>
    <ligand>
        <name>[4Fe-4S] cluster</name>
        <dbReference type="ChEBI" id="CHEBI:49883"/>
        <label>1</label>
    </ligand>
</feature>
<feature type="binding site" evidence="1">
    <location>
        <position position="148"/>
    </location>
    <ligand>
        <name>[4Fe-4S] cluster</name>
        <dbReference type="ChEBI" id="CHEBI:49883"/>
        <label>2</label>
        <note>4Fe-4S-S-AdoMet</note>
    </ligand>
</feature>
<feature type="binding site" evidence="1">
    <location>
        <position position="152"/>
    </location>
    <ligand>
        <name>[4Fe-4S] cluster</name>
        <dbReference type="ChEBI" id="CHEBI:49883"/>
        <label>2</label>
        <note>4Fe-4S-S-AdoMet</note>
    </ligand>
</feature>
<feature type="binding site" evidence="1">
    <location>
        <position position="155"/>
    </location>
    <ligand>
        <name>[4Fe-4S] cluster</name>
        <dbReference type="ChEBI" id="CHEBI:49883"/>
        <label>2</label>
        <note>4Fe-4S-S-AdoMet</note>
    </ligand>
</feature>
<dbReference type="EC" id="2.8.4.3" evidence="1"/>
<dbReference type="EMBL" id="CP000359">
    <property type="protein sequence ID" value="ABF45664.1"/>
    <property type="molecule type" value="Genomic_DNA"/>
</dbReference>
<dbReference type="RefSeq" id="WP_011530501.1">
    <property type="nucleotide sequence ID" value="NC_008025.1"/>
</dbReference>
<dbReference type="SMR" id="Q1IYM0"/>
<dbReference type="STRING" id="319795.Dgeo_1369"/>
<dbReference type="KEGG" id="dge:Dgeo_1369"/>
<dbReference type="eggNOG" id="COG0621">
    <property type="taxonomic scope" value="Bacteria"/>
</dbReference>
<dbReference type="HOGENOM" id="CLU_018697_2_0_0"/>
<dbReference type="Proteomes" id="UP000002431">
    <property type="component" value="Chromosome"/>
</dbReference>
<dbReference type="GO" id="GO:0005829">
    <property type="term" value="C:cytosol"/>
    <property type="evidence" value="ECO:0007669"/>
    <property type="project" value="TreeGrafter"/>
</dbReference>
<dbReference type="GO" id="GO:0051539">
    <property type="term" value="F:4 iron, 4 sulfur cluster binding"/>
    <property type="evidence" value="ECO:0007669"/>
    <property type="project" value="UniProtKB-UniRule"/>
</dbReference>
<dbReference type="GO" id="GO:0046872">
    <property type="term" value="F:metal ion binding"/>
    <property type="evidence" value="ECO:0007669"/>
    <property type="project" value="UniProtKB-KW"/>
</dbReference>
<dbReference type="GO" id="GO:0035597">
    <property type="term" value="F:N6-isopentenyladenosine methylthiotransferase activity"/>
    <property type="evidence" value="ECO:0007669"/>
    <property type="project" value="TreeGrafter"/>
</dbReference>
<dbReference type="CDD" id="cd01335">
    <property type="entry name" value="Radical_SAM"/>
    <property type="match status" value="1"/>
</dbReference>
<dbReference type="FunFam" id="3.40.50.12160:FF:000003">
    <property type="entry name" value="CDK5 regulatory subunit-associated protein 1"/>
    <property type="match status" value="1"/>
</dbReference>
<dbReference type="FunFam" id="3.80.30.20:FF:000001">
    <property type="entry name" value="tRNA-2-methylthio-N(6)-dimethylallyladenosine synthase 2"/>
    <property type="match status" value="1"/>
</dbReference>
<dbReference type="Gene3D" id="3.40.50.12160">
    <property type="entry name" value="Methylthiotransferase, N-terminal domain"/>
    <property type="match status" value="1"/>
</dbReference>
<dbReference type="Gene3D" id="3.80.30.20">
    <property type="entry name" value="tm_1862 like domain"/>
    <property type="match status" value="1"/>
</dbReference>
<dbReference type="HAMAP" id="MF_01864">
    <property type="entry name" value="tRNA_metthiotr_MiaB"/>
    <property type="match status" value="1"/>
</dbReference>
<dbReference type="InterPro" id="IPR006638">
    <property type="entry name" value="Elp3/MiaA/NifB-like_rSAM"/>
</dbReference>
<dbReference type="InterPro" id="IPR005839">
    <property type="entry name" value="Methylthiotransferase"/>
</dbReference>
<dbReference type="InterPro" id="IPR020612">
    <property type="entry name" value="Methylthiotransferase_CS"/>
</dbReference>
<dbReference type="InterPro" id="IPR013848">
    <property type="entry name" value="Methylthiotransferase_N"/>
</dbReference>
<dbReference type="InterPro" id="IPR038135">
    <property type="entry name" value="Methylthiotransferase_N_sf"/>
</dbReference>
<dbReference type="InterPro" id="IPR006463">
    <property type="entry name" value="MiaB_methiolase"/>
</dbReference>
<dbReference type="InterPro" id="IPR007197">
    <property type="entry name" value="rSAM"/>
</dbReference>
<dbReference type="InterPro" id="IPR023404">
    <property type="entry name" value="rSAM_horseshoe"/>
</dbReference>
<dbReference type="NCBIfam" id="TIGR01574">
    <property type="entry name" value="miaB-methiolase"/>
    <property type="match status" value="1"/>
</dbReference>
<dbReference type="NCBIfam" id="TIGR00089">
    <property type="entry name" value="MiaB/RimO family radical SAM methylthiotransferase"/>
    <property type="match status" value="1"/>
</dbReference>
<dbReference type="PANTHER" id="PTHR43020">
    <property type="entry name" value="CDK5 REGULATORY SUBUNIT-ASSOCIATED PROTEIN 1"/>
    <property type="match status" value="1"/>
</dbReference>
<dbReference type="PANTHER" id="PTHR43020:SF2">
    <property type="entry name" value="MITOCHONDRIAL TRNA METHYLTHIOTRANSFERASE CDK5RAP1"/>
    <property type="match status" value="1"/>
</dbReference>
<dbReference type="Pfam" id="PF04055">
    <property type="entry name" value="Radical_SAM"/>
    <property type="match status" value="1"/>
</dbReference>
<dbReference type="Pfam" id="PF00919">
    <property type="entry name" value="UPF0004"/>
    <property type="match status" value="1"/>
</dbReference>
<dbReference type="SFLD" id="SFLDF00273">
    <property type="entry name" value="(dimethylallyl)adenosine_tRNA"/>
    <property type="match status" value="1"/>
</dbReference>
<dbReference type="SFLD" id="SFLDG01082">
    <property type="entry name" value="B12-binding_domain_containing"/>
    <property type="match status" value="1"/>
</dbReference>
<dbReference type="SFLD" id="SFLDS00029">
    <property type="entry name" value="Radical_SAM"/>
    <property type="match status" value="1"/>
</dbReference>
<dbReference type="SMART" id="SM00729">
    <property type="entry name" value="Elp3"/>
    <property type="match status" value="1"/>
</dbReference>
<dbReference type="SUPFAM" id="SSF102114">
    <property type="entry name" value="Radical SAM enzymes"/>
    <property type="match status" value="1"/>
</dbReference>
<dbReference type="PROSITE" id="PS51449">
    <property type="entry name" value="MTTASE_N"/>
    <property type="match status" value="1"/>
</dbReference>
<dbReference type="PROSITE" id="PS01278">
    <property type="entry name" value="MTTASE_RADICAL"/>
    <property type="match status" value="1"/>
</dbReference>
<dbReference type="PROSITE" id="PS51918">
    <property type="entry name" value="RADICAL_SAM"/>
    <property type="match status" value="1"/>
</dbReference>
<evidence type="ECO:0000255" key="1">
    <source>
        <dbReference type="HAMAP-Rule" id="MF_01864"/>
    </source>
</evidence>
<evidence type="ECO:0000255" key="2">
    <source>
        <dbReference type="PROSITE-ProRule" id="PRU01266"/>
    </source>
</evidence>